<comment type="function">
    <text evidence="1">Probably participates in deamination of adenosine-34 to inosine in many tRNAs.</text>
</comment>
<comment type="catalytic activity">
    <reaction evidence="3">
        <text>adenosine(34) in tRNA + H2O + H(+) = inosine(34) in tRNA + NH4(+)</text>
        <dbReference type="Rhea" id="RHEA:43168"/>
        <dbReference type="Rhea" id="RHEA-COMP:10373"/>
        <dbReference type="Rhea" id="RHEA-COMP:10374"/>
        <dbReference type="ChEBI" id="CHEBI:15377"/>
        <dbReference type="ChEBI" id="CHEBI:15378"/>
        <dbReference type="ChEBI" id="CHEBI:28938"/>
        <dbReference type="ChEBI" id="CHEBI:74411"/>
        <dbReference type="ChEBI" id="CHEBI:82852"/>
        <dbReference type="EC" id="3.5.4.33"/>
    </reaction>
</comment>
<comment type="cofactor">
    <cofactor evidence="1">
        <name>Zn(2+)</name>
        <dbReference type="ChEBI" id="CHEBI:29105"/>
    </cofactor>
</comment>
<comment type="alternative products">
    <event type="alternative splicing"/>
    <isoform>
        <id>Q5RIV4-1</id>
        <name>1</name>
        <sequence type="displayed"/>
    </isoform>
    <isoform>
        <id>Q5RIV4-2</id>
        <name>2</name>
        <sequence type="described" ref="VSP_029612"/>
    </isoform>
</comment>
<comment type="similarity">
    <text evidence="3">Belongs to the cytidine and deoxycytidylate deaminase family. ADAT2 subfamily.</text>
</comment>
<comment type="sequence caution" evidence="3">
    <conflict type="erroneous initiation">
        <sequence resource="EMBL-CDS" id="AAI35110"/>
    </conflict>
</comment>
<keyword id="KW-0025">Alternative splicing</keyword>
<keyword id="KW-0378">Hydrolase</keyword>
<keyword id="KW-0479">Metal-binding</keyword>
<keyword id="KW-1185">Reference proteome</keyword>
<keyword id="KW-0819">tRNA processing</keyword>
<keyword id="KW-0862">Zinc</keyword>
<proteinExistence type="evidence at transcript level"/>
<reference key="1">
    <citation type="journal article" date="2013" name="Nature">
        <title>The zebrafish reference genome sequence and its relationship to the human genome.</title>
        <authorList>
            <person name="Howe K."/>
            <person name="Clark M.D."/>
            <person name="Torroja C.F."/>
            <person name="Torrance J."/>
            <person name="Berthelot C."/>
            <person name="Muffato M."/>
            <person name="Collins J.E."/>
            <person name="Humphray S."/>
            <person name="McLaren K."/>
            <person name="Matthews L."/>
            <person name="McLaren S."/>
            <person name="Sealy I."/>
            <person name="Caccamo M."/>
            <person name="Churcher C."/>
            <person name="Scott C."/>
            <person name="Barrett J.C."/>
            <person name="Koch R."/>
            <person name="Rauch G.J."/>
            <person name="White S."/>
            <person name="Chow W."/>
            <person name="Kilian B."/>
            <person name="Quintais L.T."/>
            <person name="Guerra-Assuncao J.A."/>
            <person name="Zhou Y."/>
            <person name="Gu Y."/>
            <person name="Yen J."/>
            <person name="Vogel J.H."/>
            <person name="Eyre T."/>
            <person name="Redmond S."/>
            <person name="Banerjee R."/>
            <person name="Chi J."/>
            <person name="Fu B."/>
            <person name="Langley E."/>
            <person name="Maguire S.F."/>
            <person name="Laird G.K."/>
            <person name="Lloyd D."/>
            <person name="Kenyon E."/>
            <person name="Donaldson S."/>
            <person name="Sehra H."/>
            <person name="Almeida-King J."/>
            <person name="Loveland J."/>
            <person name="Trevanion S."/>
            <person name="Jones M."/>
            <person name="Quail M."/>
            <person name="Willey D."/>
            <person name="Hunt A."/>
            <person name="Burton J."/>
            <person name="Sims S."/>
            <person name="McLay K."/>
            <person name="Plumb B."/>
            <person name="Davis J."/>
            <person name="Clee C."/>
            <person name="Oliver K."/>
            <person name="Clark R."/>
            <person name="Riddle C."/>
            <person name="Elliot D."/>
            <person name="Threadgold G."/>
            <person name="Harden G."/>
            <person name="Ware D."/>
            <person name="Begum S."/>
            <person name="Mortimore B."/>
            <person name="Kerry G."/>
            <person name="Heath P."/>
            <person name="Phillimore B."/>
            <person name="Tracey A."/>
            <person name="Corby N."/>
            <person name="Dunn M."/>
            <person name="Johnson C."/>
            <person name="Wood J."/>
            <person name="Clark S."/>
            <person name="Pelan S."/>
            <person name="Griffiths G."/>
            <person name="Smith M."/>
            <person name="Glithero R."/>
            <person name="Howden P."/>
            <person name="Barker N."/>
            <person name="Lloyd C."/>
            <person name="Stevens C."/>
            <person name="Harley J."/>
            <person name="Holt K."/>
            <person name="Panagiotidis G."/>
            <person name="Lovell J."/>
            <person name="Beasley H."/>
            <person name="Henderson C."/>
            <person name="Gordon D."/>
            <person name="Auger K."/>
            <person name="Wright D."/>
            <person name="Collins J."/>
            <person name="Raisen C."/>
            <person name="Dyer L."/>
            <person name="Leung K."/>
            <person name="Robertson L."/>
            <person name="Ambridge K."/>
            <person name="Leongamornlert D."/>
            <person name="McGuire S."/>
            <person name="Gilderthorp R."/>
            <person name="Griffiths C."/>
            <person name="Manthravadi D."/>
            <person name="Nichol S."/>
            <person name="Barker G."/>
            <person name="Whitehead S."/>
            <person name="Kay M."/>
            <person name="Brown J."/>
            <person name="Murnane C."/>
            <person name="Gray E."/>
            <person name="Humphries M."/>
            <person name="Sycamore N."/>
            <person name="Barker D."/>
            <person name="Saunders D."/>
            <person name="Wallis J."/>
            <person name="Babbage A."/>
            <person name="Hammond S."/>
            <person name="Mashreghi-Mohammadi M."/>
            <person name="Barr L."/>
            <person name="Martin S."/>
            <person name="Wray P."/>
            <person name="Ellington A."/>
            <person name="Matthews N."/>
            <person name="Ellwood M."/>
            <person name="Woodmansey R."/>
            <person name="Clark G."/>
            <person name="Cooper J."/>
            <person name="Tromans A."/>
            <person name="Grafham D."/>
            <person name="Skuce C."/>
            <person name="Pandian R."/>
            <person name="Andrews R."/>
            <person name="Harrison E."/>
            <person name="Kimberley A."/>
            <person name="Garnett J."/>
            <person name="Fosker N."/>
            <person name="Hall R."/>
            <person name="Garner P."/>
            <person name="Kelly D."/>
            <person name="Bird C."/>
            <person name="Palmer S."/>
            <person name="Gehring I."/>
            <person name="Berger A."/>
            <person name="Dooley C.M."/>
            <person name="Ersan-Urun Z."/>
            <person name="Eser C."/>
            <person name="Geiger H."/>
            <person name="Geisler M."/>
            <person name="Karotki L."/>
            <person name="Kirn A."/>
            <person name="Konantz J."/>
            <person name="Konantz M."/>
            <person name="Oberlander M."/>
            <person name="Rudolph-Geiger S."/>
            <person name="Teucke M."/>
            <person name="Lanz C."/>
            <person name="Raddatz G."/>
            <person name="Osoegawa K."/>
            <person name="Zhu B."/>
            <person name="Rapp A."/>
            <person name="Widaa S."/>
            <person name="Langford C."/>
            <person name="Yang F."/>
            <person name="Schuster S.C."/>
            <person name="Carter N.P."/>
            <person name="Harrow J."/>
            <person name="Ning Z."/>
            <person name="Herrero J."/>
            <person name="Searle S.M."/>
            <person name="Enright A."/>
            <person name="Geisler R."/>
            <person name="Plasterk R.H."/>
            <person name="Lee C."/>
            <person name="Westerfield M."/>
            <person name="de Jong P.J."/>
            <person name="Zon L.I."/>
            <person name="Postlethwait J.H."/>
            <person name="Nusslein-Volhard C."/>
            <person name="Hubbard T.J."/>
            <person name="Roest Crollius H."/>
            <person name="Rogers J."/>
            <person name="Stemple D.L."/>
        </authorList>
    </citation>
    <scope>NUCLEOTIDE SEQUENCE [LARGE SCALE GENOMIC DNA]</scope>
    <source>
        <strain>Tuebingen</strain>
    </source>
</reference>
<reference key="2">
    <citation type="submission" date="2007-03" db="EMBL/GenBank/DDBJ databases">
        <authorList>
            <consortium name="NIH - Zebrafish Gene Collection (ZGC) project"/>
        </authorList>
    </citation>
    <scope>NUCLEOTIDE SEQUENCE [LARGE SCALE MRNA] (ISOFORM 1)</scope>
    <source>
        <tissue>Embryo</tissue>
    </source>
</reference>
<name>ADAT2_DANRE</name>
<dbReference type="EC" id="3.5.4.33" evidence="3"/>
<dbReference type="EMBL" id="BX088644">
    <property type="protein sequence ID" value="CAI11650.1"/>
    <property type="molecule type" value="Genomic_DNA"/>
</dbReference>
<dbReference type="EMBL" id="BC135109">
    <property type="protein sequence ID" value="AAI35110.1"/>
    <property type="status" value="ALT_INIT"/>
    <property type="molecule type" value="mRNA"/>
</dbReference>
<dbReference type="RefSeq" id="NP_001076566.1">
    <molecule id="Q5RIV4-2"/>
    <property type="nucleotide sequence ID" value="NM_001083097.1"/>
</dbReference>
<dbReference type="RefSeq" id="XP_005160675.1">
    <molecule id="Q5RIV4-1"/>
    <property type="nucleotide sequence ID" value="XM_005160618.5"/>
</dbReference>
<dbReference type="RefSeq" id="XP_068071466.1">
    <molecule id="Q5RIV4-2"/>
    <property type="nucleotide sequence ID" value="XM_068215365.1"/>
</dbReference>
<dbReference type="SMR" id="Q5RIV4"/>
<dbReference type="FunCoup" id="Q5RIV4">
    <property type="interactions" value="663"/>
</dbReference>
<dbReference type="STRING" id="7955.ENSDARP00000127393"/>
<dbReference type="PaxDb" id="7955-ENSDARP00000061472"/>
<dbReference type="Ensembl" id="ENSDART00000152885">
    <molecule id="Q5RIV4-1"/>
    <property type="protein sequence ID" value="ENSDARP00000127393"/>
    <property type="gene ID" value="ENSDARG00000041944"/>
</dbReference>
<dbReference type="GeneID" id="100034610"/>
<dbReference type="AGR" id="ZFIN:ZDB-GENE-041014-360"/>
<dbReference type="CTD" id="134637"/>
<dbReference type="ZFIN" id="ZDB-GENE-041014-360">
    <property type="gene designation" value="adat2"/>
</dbReference>
<dbReference type="eggNOG" id="KOG1018">
    <property type="taxonomic scope" value="Eukaryota"/>
</dbReference>
<dbReference type="HOGENOM" id="CLU_025810_8_1_1"/>
<dbReference type="InParanoid" id="Q5RIV4"/>
<dbReference type="OMA" id="PCQMCAG"/>
<dbReference type="OrthoDB" id="408702at2759"/>
<dbReference type="TreeFam" id="TF313782"/>
<dbReference type="PRO" id="PR:Q5RIV4"/>
<dbReference type="Proteomes" id="UP000000437">
    <property type="component" value="Chromosome 20"/>
</dbReference>
<dbReference type="Bgee" id="ENSDARG00000041944">
    <property type="expression patterns" value="Expressed in early embryo and 21 other cell types or tissues"/>
</dbReference>
<dbReference type="ExpressionAtlas" id="Q5RIV4">
    <property type="expression patterns" value="baseline"/>
</dbReference>
<dbReference type="GO" id="GO:0052717">
    <property type="term" value="F:tRNA-specific adenosine-34 deaminase activity"/>
    <property type="evidence" value="ECO:0000318"/>
    <property type="project" value="GO_Central"/>
</dbReference>
<dbReference type="GO" id="GO:0008270">
    <property type="term" value="F:zinc ion binding"/>
    <property type="evidence" value="ECO:0007669"/>
    <property type="project" value="InterPro"/>
</dbReference>
<dbReference type="GO" id="GO:0002100">
    <property type="term" value="P:tRNA wobble adenosine to inosine editing"/>
    <property type="evidence" value="ECO:0000318"/>
    <property type="project" value="GO_Central"/>
</dbReference>
<dbReference type="CDD" id="cd01285">
    <property type="entry name" value="nucleoside_deaminase"/>
    <property type="match status" value="1"/>
</dbReference>
<dbReference type="FunFam" id="3.40.140.10:FF:000036">
    <property type="entry name" value="tRNA-specific adenosine deaminase 2"/>
    <property type="match status" value="1"/>
</dbReference>
<dbReference type="Gene3D" id="3.40.140.10">
    <property type="entry name" value="Cytidine Deaminase, domain 2"/>
    <property type="match status" value="1"/>
</dbReference>
<dbReference type="HAMAP" id="MF_00972">
    <property type="entry name" value="tRNA_aden_deaminase"/>
    <property type="match status" value="1"/>
</dbReference>
<dbReference type="InterPro" id="IPR016192">
    <property type="entry name" value="APOBEC/CMP_deaminase_Zn-bd"/>
</dbReference>
<dbReference type="InterPro" id="IPR002125">
    <property type="entry name" value="CMP_dCMP_dom"/>
</dbReference>
<dbReference type="InterPro" id="IPR016193">
    <property type="entry name" value="Cytidine_deaminase-like"/>
</dbReference>
<dbReference type="InterPro" id="IPR028883">
    <property type="entry name" value="tRNA_aden_deaminase"/>
</dbReference>
<dbReference type="PANTHER" id="PTHR11079">
    <property type="entry name" value="CYTOSINE DEAMINASE FAMILY MEMBER"/>
    <property type="match status" value="1"/>
</dbReference>
<dbReference type="PANTHER" id="PTHR11079:SF149">
    <property type="entry name" value="TRNA-SPECIFIC ADENOSINE DEAMINASE 2"/>
    <property type="match status" value="1"/>
</dbReference>
<dbReference type="Pfam" id="PF14437">
    <property type="entry name" value="MafB19-deam"/>
    <property type="match status" value="1"/>
</dbReference>
<dbReference type="SUPFAM" id="SSF53927">
    <property type="entry name" value="Cytidine deaminase-like"/>
    <property type="match status" value="1"/>
</dbReference>
<dbReference type="PROSITE" id="PS00903">
    <property type="entry name" value="CYT_DCMP_DEAMINASES_1"/>
    <property type="match status" value="1"/>
</dbReference>
<dbReference type="PROSITE" id="PS51747">
    <property type="entry name" value="CYT_DCMP_DEAMINASES_2"/>
    <property type="match status" value="1"/>
</dbReference>
<organism>
    <name type="scientific">Danio rerio</name>
    <name type="common">Zebrafish</name>
    <name type="synonym">Brachydanio rerio</name>
    <dbReference type="NCBI Taxonomy" id="7955"/>
    <lineage>
        <taxon>Eukaryota</taxon>
        <taxon>Metazoa</taxon>
        <taxon>Chordata</taxon>
        <taxon>Craniata</taxon>
        <taxon>Vertebrata</taxon>
        <taxon>Euteleostomi</taxon>
        <taxon>Actinopterygii</taxon>
        <taxon>Neopterygii</taxon>
        <taxon>Teleostei</taxon>
        <taxon>Ostariophysi</taxon>
        <taxon>Cypriniformes</taxon>
        <taxon>Danionidae</taxon>
        <taxon>Danioninae</taxon>
        <taxon>Danio</taxon>
    </lineage>
</organism>
<protein>
    <recommendedName>
        <fullName>tRNA-specific adenosine deaminase 2</fullName>
        <ecNumber evidence="3">3.5.4.33</ecNumber>
    </recommendedName>
    <alternativeName>
        <fullName>Deaminase domain-containing protein 1</fullName>
    </alternativeName>
    <alternativeName>
        <fullName>tRNA-specific adenosine-34 deaminase subunit ADAT2</fullName>
    </alternativeName>
</protein>
<accession>Q5RIV4</accession>
<accession>A4IGI0</accession>
<gene>
    <name type="primary">adat2</name>
    <name type="synonym">deadc1</name>
    <name type="ORF">si:ch211-157l15.2</name>
</gene>
<evidence type="ECO:0000250" key="1"/>
<evidence type="ECO:0000255" key="2">
    <source>
        <dbReference type="PROSITE-ProRule" id="PRU01083"/>
    </source>
</evidence>
<evidence type="ECO:0000305" key="3"/>
<sequence>MQEVGVDPEKNDFLQPSDSEVQTWMAKAFDMAVEALENGEVPVGCLMVYNNEIIGKGRNEVNETKNATRHAEMVALDQVLDWCRLREKDCKEVCEQTVLYVTVEPCIMCAAALRLLRIPFVVYGCKNERFGGCGSVLDVSSDHLPHTGTSFKCIAGYRAEEAVEMLKTFYKQENPNAPKPKVRKDSINPQDGAAVIQVMRGPPDEETETIAHLS</sequence>
<feature type="chain" id="PRO_0000287655" description="tRNA-specific adenosine deaminase 2">
    <location>
        <begin position="1"/>
        <end position="214"/>
    </location>
</feature>
<feature type="domain" description="CMP/dCMP-type deaminase" evidence="2">
    <location>
        <begin position="19"/>
        <end position="144"/>
    </location>
</feature>
<feature type="active site" description="Proton donor" evidence="1">
    <location>
        <position position="72"/>
    </location>
</feature>
<feature type="binding site" evidence="1">
    <location>
        <position position="70"/>
    </location>
    <ligand>
        <name>Zn(2+)</name>
        <dbReference type="ChEBI" id="CHEBI:29105"/>
        <note>catalytic</note>
    </ligand>
</feature>
<feature type="binding site" evidence="1">
    <location>
        <position position="106"/>
    </location>
    <ligand>
        <name>Zn(2+)</name>
        <dbReference type="ChEBI" id="CHEBI:29105"/>
        <note>catalytic</note>
    </ligand>
</feature>
<feature type="binding site" evidence="1">
    <location>
        <position position="109"/>
    </location>
    <ligand>
        <name>Zn(2+)</name>
        <dbReference type="ChEBI" id="CHEBI:29105"/>
        <note>catalytic</note>
    </ligand>
</feature>
<feature type="splice variant" id="VSP_029612" description="In isoform 2." evidence="3">
    <original>APKPKVRKDSINPQDGAAVIQVMRGPPDEETETIAHLS</original>
    <variation>GQCQTGGRKRRFLRLLLSDCLRLGSPSAVC</variation>
    <location>
        <begin position="177"/>
        <end position="214"/>
    </location>
</feature>
<feature type="sequence conflict" description="In Ref. 2; AAI35110." evidence="3" ref="2">
    <original>M</original>
    <variation>I</variation>
    <location>
        <position position="199"/>
    </location>
</feature>
<feature type="sequence conflict" description="In Ref. 2; AAI35110." evidence="3" ref="2">
    <original>I</original>
    <variation>N</variation>
    <location>
        <position position="210"/>
    </location>
</feature>